<name>SFGH2_SHIDS</name>
<proteinExistence type="inferred from homology"/>
<organism>
    <name type="scientific">Shigella dysenteriae serotype 1 (strain Sd197)</name>
    <dbReference type="NCBI Taxonomy" id="300267"/>
    <lineage>
        <taxon>Bacteria</taxon>
        <taxon>Pseudomonadati</taxon>
        <taxon>Pseudomonadota</taxon>
        <taxon>Gammaproteobacteria</taxon>
        <taxon>Enterobacterales</taxon>
        <taxon>Enterobacteriaceae</taxon>
        <taxon>Shigella</taxon>
    </lineage>
</organism>
<evidence type="ECO:0000250" key="1"/>
<evidence type="ECO:0000305" key="2"/>
<feature type="chain" id="PRO_0000341676" description="S-formylglutathione hydrolase YeiG">
    <location>
        <begin position="1"/>
        <end position="278"/>
    </location>
</feature>
<feature type="active site" description="Charge relay system" evidence="1">
    <location>
        <position position="145"/>
    </location>
</feature>
<feature type="active site" description="Charge relay system" evidence="1">
    <location>
        <position position="223"/>
    </location>
</feature>
<feature type="active site" description="Charge relay system" evidence="1">
    <location>
        <position position="256"/>
    </location>
</feature>
<dbReference type="EC" id="3.1.2.12"/>
<dbReference type="EMBL" id="CP000034">
    <property type="protein sequence ID" value="ABB62202.1"/>
    <property type="molecule type" value="Genomic_DNA"/>
</dbReference>
<dbReference type="RefSeq" id="WP_000425501.1">
    <property type="nucleotide sequence ID" value="NC_007606.1"/>
</dbReference>
<dbReference type="RefSeq" id="YP_403693.1">
    <property type="nucleotide sequence ID" value="NC_007606.1"/>
</dbReference>
<dbReference type="SMR" id="Q32EQ3"/>
<dbReference type="STRING" id="300267.SDY_2112"/>
<dbReference type="ESTHER" id="shiss-yeiG">
    <property type="family name" value="A85-EsteraseD-FGH"/>
</dbReference>
<dbReference type="EnsemblBacteria" id="ABB62202">
    <property type="protein sequence ID" value="ABB62202"/>
    <property type="gene ID" value="SDY_2112"/>
</dbReference>
<dbReference type="KEGG" id="sdy:SDY_2112"/>
<dbReference type="PATRIC" id="fig|300267.13.peg.2543"/>
<dbReference type="HOGENOM" id="CLU_056472_0_0_6"/>
<dbReference type="Proteomes" id="UP000002716">
    <property type="component" value="Chromosome"/>
</dbReference>
<dbReference type="GO" id="GO:0005829">
    <property type="term" value="C:cytosol"/>
    <property type="evidence" value="ECO:0007669"/>
    <property type="project" value="TreeGrafter"/>
</dbReference>
<dbReference type="GO" id="GO:0052689">
    <property type="term" value="F:carboxylic ester hydrolase activity"/>
    <property type="evidence" value="ECO:0007669"/>
    <property type="project" value="UniProtKB-KW"/>
</dbReference>
<dbReference type="GO" id="GO:0018738">
    <property type="term" value="F:S-formylglutathione hydrolase activity"/>
    <property type="evidence" value="ECO:0007669"/>
    <property type="project" value="UniProtKB-EC"/>
</dbReference>
<dbReference type="GO" id="GO:0046294">
    <property type="term" value="P:formaldehyde catabolic process"/>
    <property type="evidence" value="ECO:0007669"/>
    <property type="project" value="InterPro"/>
</dbReference>
<dbReference type="FunFam" id="3.40.50.1820:FF:000002">
    <property type="entry name" value="S-formylglutathione hydrolase"/>
    <property type="match status" value="1"/>
</dbReference>
<dbReference type="Gene3D" id="3.40.50.1820">
    <property type="entry name" value="alpha/beta hydrolase"/>
    <property type="match status" value="1"/>
</dbReference>
<dbReference type="InterPro" id="IPR029058">
    <property type="entry name" value="AB_hydrolase_fold"/>
</dbReference>
<dbReference type="InterPro" id="IPR000801">
    <property type="entry name" value="Esterase-like"/>
</dbReference>
<dbReference type="InterPro" id="IPR014186">
    <property type="entry name" value="S-formylglutathione_hydrol"/>
</dbReference>
<dbReference type="NCBIfam" id="TIGR02821">
    <property type="entry name" value="fghA_ester_D"/>
    <property type="match status" value="1"/>
</dbReference>
<dbReference type="PANTHER" id="PTHR10061">
    <property type="entry name" value="S-FORMYLGLUTATHIONE HYDROLASE"/>
    <property type="match status" value="1"/>
</dbReference>
<dbReference type="PANTHER" id="PTHR10061:SF1">
    <property type="entry name" value="S-FORMYLGLUTATHIONE HYDROLASE YEIG"/>
    <property type="match status" value="1"/>
</dbReference>
<dbReference type="Pfam" id="PF00756">
    <property type="entry name" value="Esterase"/>
    <property type="match status" value="1"/>
</dbReference>
<dbReference type="SUPFAM" id="SSF53474">
    <property type="entry name" value="alpha/beta-Hydrolases"/>
    <property type="match status" value="1"/>
</dbReference>
<gene>
    <name type="primary">yeiG</name>
    <name type="ordered locus">SDY_2112</name>
</gene>
<keyword id="KW-0378">Hydrolase</keyword>
<keyword id="KW-1185">Reference proteome</keyword>
<keyword id="KW-0719">Serine esterase</keyword>
<reference key="1">
    <citation type="journal article" date="2005" name="Nucleic Acids Res.">
        <title>Genome dynamics and diversity of Shigella species, the etiologic agents of bacillary dysentery.</title>
        <authorList>
            <person name="Yang F."/>
            <person name="Yang J."/>
            <person name="Zhang X."/>
            <person name="Chen L."/>
            <person name="Jiang Y."/>
            <person name="Yan Y."/>
            <person name="Tang X."/>
            <person name="Wang J."/>
            <person name="Xiong Z."/>
            <person name="Dong J."/>
            <person name="Xue Y."/>
            <person name="Zhu Y."/>
            <person name="Xu X."/>
            <person name="Sun L."/>
            <person name="Chen S."/>
            <person name="Nie H."/>
            <person name="Peng J."/>
            <person name="Xu J."/>
            <person name="Wang Y."/>
            <person name="Yuan Z."/>
            <person name="Wen Y."/>
            <person name="Yao Z."/>
            <person name="Shen Y."/>
            <person name="Qiang B."/>
            <person name="Hou Y."/>
            <person name="Yu J."/>
            <person name="Jin Q."/>
        </authorList>
    </citation>
    <scope>NUCLEOTIDE SEQUENCE [LARGE SCALE GENOMIC DNA]</scope>
    <source>
        <strain>Sd197</strain>
    </source>
</reference>
<comment type="function">
    <text evidence="1">Serine hydrolase involved in the detoxification of formaldehyde. Hydrolyzes S-formylglutathione to glutathione and formate (By similarity).</text>
</comment>
<comment type="catalytic activity">
    <reaction>
        <text>S-formylglutathione + H2O = formate + glutathione + H(+)</text>
        <dbReference type="Rhea" id="RHEA:14961"/>
        <dbReference type="ChEBI" id="CHEBI:15377"/>
        <dbReference type="ChEBI" id="CHEBI:15378"/>
        <dbReference type="ChEBI" id="CHEBI:15740"/>
        <dbReference type="ChEBI" id="CHEBI:57688"/>
        <dbReference type="ChEBI" id="CHEBI:57925"/>
        <dbReference type="EC" id="3.1.2.12"/>
    </reaction>
</comment>
<comment type="similarity">
    <text evidence="2">Belongs to the esterase D family.</text>
</comment>
<sequence>MEMLEEHRCFQGWQQRWRHDSSTLNCPMTFSIFLPPPRDHTPPPVLYWLSGLTCNDENFTTKAGAQRVAAELGIVLVMPDTSPRGEKVANGDGYDLGQSAGFYLNATQPPWATHYRMYDYLRDELPALVQSQFNVSDRCAISGHSMGGHGALIMALKNPGKYTSVSAFAPIVNPCSVPWGIKAFSRYLGEDKNAWLEWDRCALMYASNAQDAIPTLIDQGDNDQFLADQLQPAVLAEAARQKAWPMTLRIQPGYDHSYYFIASFIEDHLRFHAQYLLK</sequence>
<protein>
    <recommendedName>
        <fullName>S-formylglutathione hydrolase YeiG</fullName>
        <shortName>FGH</shortName>
        <ecNumber>3.1.2.12</ecNumber>
    </recommendedName>
</protein>
<accession>Q32EQ3</accession>